<feature type="chain" id="PRO_0000376133" description="NADH-quinone oxidoreductase subunit B">
    <location>
        <begin position="1"/>
        <end position="172"/>
    </location>
</feature>
<feature type="binding site" evidence="1">
    <location>
        <position position="46"/>
    </location>
    <ligand>
        <name>[4Fe-4S] cluster</name>
        <dbReference type="ChEBI" id="CHEBI:49883"/>
    </ligand>
</feature>
<feature type="binding site" evidence="1">
    <location>
        <position position="47"/>
    </location>
    <ligand>
        <name>[4Fe-4S] cluster</name>
        <dbReference type="ChEBI" id="CHEBI:49883"/>
    </ligand>
</feature>
<feature type="binding site" evidence="1">
    <location>
        <position position="111"/>
    </location>
    <ligand>
        <name>[4Fe-4S] cluster</name>
        <dbReference type="ChEBI" id="CHEBI:49883"/>
    </ligand>
</feature>
<feature type="binding site" evidence="1">
    <location>
        <position position="141"/>
    </location>
    <ligand>
        <name>[4Fe-4S] cluster</name>
        <dbReference type="ChEBI" id="CHEBI:49883"/>
    </ligand>
</feature>
<organism>
    <name type="scientific">Bacillus cereus (strain G9842)</name>
    <dbReference type="NCBI Taxonomy" id="405531"/>
    <lineage>
        <taxon>Bacteria</taxon>
        <taxon>Bacillati</taxon>
        <taxon>Bacillota</taxon>
        <taxon>Bacilli</taxon>
        <taxon>Bacillales</taxon>
        <taxon>Bacillaceae</taxon>
        <taxon>Bacillus</taxon>
        <taxon>Bacillus cereus group</taxon>
    </lineage>
</organism>
<gene>
    <name evidence="1" type="primary">nuoB</name>
    <name type="ordered locus">BCG9842_B5530</name>
</gene>
<keyword id="KW-0004">4Fe-4S</keyword>
<keyword id="KW-1003">Cell membrane</keyword>
<keyword id="KW-0408">Iron</keyword>
<keyword id="KW-0411">Iron-sulfur</keyword>
<keyword id="KW-0472">Membrane</keyword>
<keyword id="KW-0479">Metal-binding</keyword>
<keyword id="KW-0520">NAD</keyword>
<keyword id="KW-0874">Quinone</keyword>
<keyword id="KW-1278">Translocase</keyword>
<keyword id="KW-0813">Transport</keyword>
<name>NUOB_BACC2</name>
<sequence length="172" mass="19254">MVINFEELHPNERVELERNIFFSTLEQLKGWARSNSLWPMTFGLACCAIEMMGVGSSHYDLDRFGSFFRTSPRQSDVMIVSGTVTKKMAPIVRRLYDQMPEPKWVIAMGSCATAGGPYVNSYAVVKGVDQIVPVDVYIPGCPPNPAALIYGINKLKEKIRYEAKTGKQVTNK</sequence>
<evidence type="ECO:0000255" key="1">
    <source>
        <dbReference type="HAMAP-Rule" id="MF_01356"/>
    </source>
</evidence>
<proteinExistence type="inferred from homology"/>
<protein>
    <recommendedName>
        <fullName evidence="1">NADH-quinone oxidoreductase subunit B</fullName>
        <ecNumber evidence="1">7.1.1.-</ecNumber>
    </recommendedName>
    <alternativeName>
        <fullName evidence="1">NADH dehydrogenase I subunit B</fullName>
    </alternativeName>
    <alternativeName>
        <fullName evidence="1">NDH-1 subunit B</fullName>
    </alternativeName>
</protein>
<dbReference type="EC" id="7.1.1.-" evidence="1"/>
<dbReference type="EMBL" id="CP001186">
    <property type="protein sequence ID" value="ACK94064.1"/>
    <property type="molecule type" value="Genomic_DNA"/>
</dbReference>
<dbReference type="RefSeq" id="WP_000236332.1">
    <property type="nucleotide sequence ID" value="NC_011772.1"/>
</dbReference>
<dbReference type="SMR" id="B7IQV2"/>
<dbReference type="KEGG" id="bcg:BCG9842_B5530"/>
<dbReference type="HOGENOM" id="CLU_055737_7_3_9"/>
<dbReference type="Proteomes" id="UP000006744">
    <property type="component" value="Chromosome"/>
</dbReference>
<dbReference type="GO" id="GO:0005886">
    <property type="term" value="C:plasma membrane"/>
    <property type="evidence" value="ECO:0007669"/>
    <property type="project" value="UniProtKB-SubCell"/>
</dbReference>
<dbReference type="GO" id="GO:0045271">
    <property type="term" value="C:respiratory chain complex I"/>
    <property type="evidence" value="ECO:0007669"/>
    <property type="project" value="TreeGrafter"/>
</dbReference>
<dbReference type="GO" id="GO:0051539">
    <property type="term" value="F:4 iron, 4 sulfur cluster binding"/>
    <property type="evidence" value="ECO:0007669"/>
    <property type="project" value="UniProtKB-KW"/>
</dbReference>
<dbReference type="GO" id="GO:0005506">
    <property type="term" value="F:iron ion binding"/>
    <property type="evidence" value="ECO:0007669"/>
    <property type="project" value="UniProtKB-UniRule"/>
</dbReference>
<dbReference type="GO" id="GO:0008137">
    <property type="term" value="F:NADH dehydrogenase (ubiquinone) activity"/>
    <property type="evidence" value="ECO:0007669"/>
    <property type="project" value="InterPro"/>
</dbReference>
<dbReference type="GO" id="GO:0050136">
    <property type="term" value="F:NADH:ubiquinone reductase (non-electrogenic) activity"/>
    <property type="evidence" value="ECO:0007669"/>
    <property type="project" value="UniProtKB-UniRule"/>
</dbReference>
<dbReference type="GO" id="GO:0048038">
    <property type="term" value="F:quinone binding"/>
    <property type="evidence" value="ECO:0007669"/>
    <property type="project" value="UniProtKB-KW"/>
</dbReference>
<dbReference type="GO" id="GO:0009060">
    <property type="term" value="P:aerobic respiration"/>
    <property type="evidence" value="ECO:0007669"/>
    <property type="project" value="TreeGrafter"/>
</dbReference>
<dbReference type="GO" id="GO:0015990">
    <property type="term" value="P:electron transport coupled proton transport"/>
    <property type="evidence" value="ECO:0007669"/>
    <property type="project" value="TreeGrafter"/>
</dbReference>
<dbReference type="FunFam" id="3.40.50.12280:FF:000002">
    <property type="entry name" value="NADH-quinone oxidoreductase subunit B"/>
    <property type="match status" value="1"/>
</dbReference>
<dbReference type="Gene3D" id="3.40.50.12280">
    <property type="match status" value="1"/>
</dbReference>
<dbReference type="HAMAP" id="MF_01356">
    <property type="entry name" value="NDH1_NuoB"/>
    <property type="match status" value="1"/>
</dbReference>
<dbReference type="InterPro" id="IPR006137">
    <property type="entry name" value="NADH_UbQ_OxRdtase-like_20kDa"/>
</dbReference>
<dbReference type="InterPro" id="IPR006138">
    <property type="entry name" value="NADH_UQ_OxRdtase_20Kd_su"/>
</dbReference>
<dbReference type="NCBIfam" id="TIGR01957">
    <property type="entry name" value="nuoB_fam"/>
    <property type="match status" value="1"/>
</dbReference>
<dbReference type="NCBIfam" id="NF005012">
    <property type="entry name" value="PRK06411.1"/>
    <property type="match status" value="1"/>
</dbReference>
<dbReference type="PANTHER" id="PTHR11995">
    <property type="entry name" value="NADH DEHYDROGENASE"/>
    <property type="match status" value="1"/>
</dbReference>
<dbReference type="PANTHER" id="PTHR11995:SF14">
    <property type="entry name" value="NADH DEHYDROGENASE [UBIQUINONE] IRON-SULFUR PROTEIN 7, MITOCHONDRIAL"/>
    <property type="match status" value="1"/>
</dbReference>
<dbReference type="Pfam" id="PF01058">
    <property type="entry name" value="Oxidored_q6"/>
    <property type="match status" value="1"/>
</dbReference>
<dbReference type="SUPFAM" id="SSF56770">
    <property type="entry name" value="HydA/Nqo6-like"/>
    <property type="match status" value="1"/>
</dbReference>
<reference key="1">
    <citation type="submission" date="2008-10" db="EMBL/GenBank/DDBJ databases">
        <title>Genome sequence of Bacillus cereus G9842.</title>
        <authorList>
            <person name="Dodson R.J."/>
            <person name="Durkin A.S."/>
            <person name="Rosovitz M.J."/>
            <person name="Rasko D.A."/>
            <person name="Hoffmaster A."/>
            <person name="Ravel J."/>
            <person name="Sutton G."/>
        </authorList>
    </citation>
    <scope>NUCLEOTIDE SEQUENCE [LARGE SCALE GENOMIC DNA]</scope>
    <source>
        <strain>G9842</strain>
    </source>
</reference>
<accession>B7IQV2</accession>
<comment type="function">
    <text evidence="1">NDH-1 shuttles electrons from NADH, via FMN and iron-sulfur (Fe-S) centers, to quinones in the respiratory chain. The immediate electron acceptor for the enzyme in this species is believed to be a menaquinone. Couples the redox reaction to proton translocation (for every two electrons transferred, four hydrogen ions are translocated across the cytoplasmic membrane), and thus conserves the redox energy in a proton gradient.</text>
</comment>
<comment type="catalytic activity">
    <reaction evidence="1">
        <text>a quinone + NADH + 5 H(+)(in) = a quinol + NAD(+) + 4 H(+)(out)</text>
        <dbReference type="Rhea" id="RHEA:57888"/>
        <dbReference type="ChEBI" id="CHEBI:15378"/>
        <dbReference type="ChEBI" id="CHEBI:24646"/>
        <dbReference type="ChEBI" id="CHEBI:57540"/>
        <dbReference type="ChEBI" id="CHEBI:57945"/>
        <dbReference type="ChEBI" id="CHEBI:132124"/>
    </reaction>
</comment>
<comment type="cofactor">
    <cofactor evidence="1">
        <name>[4Fe-4S] cluster</name>
        <dbReference type="ChEBI" id="CHEBI:49883"/>
    </cofactor>
    <text evidence="1">Binds 1 [4Fe-4S] cluster.</text>
</comment>
<comment type="subunit">
    <text evidence="1">NDH-1 is composed of 14 different subunits. Subunits NuoB, C, D, E, F, and G constitute the peripheral sector of the complex.</text>
</comment>
<comment type="subcellular location">
    <subcellularLocation>
        <location evidence="1">Cell membrane</location>
        <topology evidence="1">Peripheral membrane protein</topology>
        <orientation evidence="1">Cytoplasmic side</orientation>
    </subcellularLocation>
</comment>
<comment type="similarity">
    <text evidence="1">Belongs to the complex I 20 kDa subunit family.</text>
</comment>